<reference key="1">
    <citation type="journal article" date="2004" name="Nature">
        <title>Genome evolution in yeasts.</title>
        <authorList>
            <person name="Dujon B."/>
            <person name="Sherman D."/>
            <person name="Fischer G."/>
            <person name="Durrens P."/>
            <person name="Casaregola S."/>
            <person name="Lafontaine I."/>
            <person name="de Montigny J."/>
            <person name="Marck C."/>
            <person name="Neuveglise C."/>
            <person name="Talla E."/>
            <person name="Goffard N."/>
            <person name="Frangeul L."/>
            <person name="Aigle M."/>
            <person name="Anthouard V."/>
            <person name="Babour A."/>
            <person name="Barbe V."/>
            <person name="Barnay S."/>
            <person name="Blanchin S."/>
            <person name="Beckerich J.-M."/>
            <person name="Beyne E."/>
            <person name="Bleykasten C."/>
            <person name="Boisrame A."/>
            <person name="Boyer J."/>
            <person name="Cattolico L."/>
            <person name="Confanioleri F."/>
            <person name="de Daruvar A."/>
            <person name="Despons L."/>
            <person name="Fabre E."/>
            <person name="Fairhead C."/>
            <person name="Ferry-Dumazet H."/>
            <person name="Groppi A."/>
            <person name="Hantraye F."/>
            <person name="Hennequin C."/>
            <person name="Jauniaux N."/>
            <person name="Joyet P."/>
            <person name="Kachouri R."/>
            <person name="Kerrest A."/>
            <person name="Koszul R."/>
            <person name="Lemaire M."/>
            <person name="Lesur I."/>
            <person name="Ma L."/>
            <person name="Muller H."/>
            <person name="Nicaud J.-M."/>
            <person name="Nikolski M."/>
            <person name="Oztas S."/>
            <person name="Ozier-Kalogeropoulos O."/>
            <person name="Pellenz S."/>
            <person name="Potier S."/>
            <person name="Richard G.-F."/>
            <person name="Straub M.-L."/>
            <person name="Suleau A."/>
            <person name="Swennen D."/>
            <person name="Tekaia F."/>
            <person name="Wesolowski-Louvel M."/>
            <person name="Westhof E."/>
            <person name="Wirth B."/>
            <person name="Zeniou-Meyer M."/>
            <person name="Zivanovic Y."/>
            <person name="Bolotin-Fukuhara M."/>
            <person name="Thierry A."/>
            <person name="Bouchier C."/>
            <person name="Caudron B."/>
            <person name="Scarpelli C."/>
            <person name="Gaillardin C."/>
            <person name="Weissenbach J."/>
            <person name="Wincker P."/>
            <person name="Souciet J.-L."/>
        </authorList>
    </citation>
    <scope>NUCLEOTIDE SEQUENCE [LARGE SCALE GENOMIC DNA]</scope>
    <source>
        <strain>CLIB 122 / E 150</strain>
    </source>
</reference>
<sequence>MLLSNVAVNRTVVHTQLVSGSRSALHALSRTSHSVPVTHTHQRRHIFSHKRRLSSSTLAIPFALSNTNSATTAPLQFLSNVSLCRVTPGTITTSAKATAPNLDKMSAEAATTAAQASASPVEDSFLKKAVSCQSETEREAVMAARAAKKALRETKETWWAPYVALTKPRLTVLVVLSAMSSYALTPEAVSLTNLLFLTVGTALCSGSANAINMGREPAYDSMMTRTRGRPVVRGAVTPNQAFTFAGITGTVGTAALYFGVNPTVAILGASNIALYGGLYTTLKRKHIINTWVGAVVGAIPPLMGWAASGGSLLHPGAWCLAGLLYAWQFPHFNALSYSIRDEYKKAGYVMTAWKNPGLNARVGLRYALLMFPLCVGLSYYNVTDWWFVLDSSVLNAWMAWWAFKFWQQENVNIALAAAGKQYSQNPFARKLFWGSVVHLPGVLLLAMIHKKGQWDWLFGPSEDEKKKTLSS</sequence>
<gene>
    <name type="primary">COX10</name>
    <name type="ordered locus">YALI0F23727g</name>
</gene>
<accession>Q6C0L2</accession>
<name>COX10_YARLI</name>
<evidence type="ECO:0000250" key="1"/>
<evidence type="ECO:0000250" key="2">
    <source>
        <dbReference type="UniProtKB" id="P24009"/>
    </source>
</evidence>
<evidence type="ECO:0000255" key="3"/>
<evidence type="ECO:0000305" key="4"/>
<dbReference type="EC" id="2.5.1.141" evidence="2"/>
<dbReference type="EMBL" id="CR382132">
    <property type="protein sequence ID" value="CAG78611.1"/>
    <property type="molecule type" value="Genomic_DNA"/>
</dbReference>
<dbReference type="RefSeq" id="XP_505800.1">
    <property type="nucleotide sequence ID" value="XM_505800.1"/>
</dbReference>
<dbReference type="SMR" id="Q6C0L2"/>
<dbReference type="FunCoup" id="Q6C0L2">
    <property type="interactions" value="854"/>
</dbReference>
<dbReference type="STRING" id="284591.Q6C0L2"/>
<dbReference type="EnsemblFungi" id="CAG78611">
    <property type="protein sequence ID" value="CAG78611"/>
    <property type="gene ID" value="YALI0_F23727g"/>
</dbReference>
<dbReference type="KEGG" id="yli:2908754"/>
<dbReference type="VEuPathDB" id="FungiDB:YALI0_F23727g"/>
<dbReference type="HOGENOM" id="CLU_029631_2_1_1"/>
<dbReference type="InParanoid" id="Q6C0L2"/>
<dbReference type="OMA" id="MGREPDF"/>
<dbReference type="OrthoDB" id="114287at4891"/>
<dbReference type="Proteomes" id="UP000001300">
    <property type="component" value="Chromosome F"/>
</dbReference>
<dbReference type="GO" id="GO:0031966">
    <property type="term" value="C:mitochondrial membrane"/>
    <property type="evidence" value="ECO:0007669"/>
    <property type="project" value="UniProtKB-SubCell"/>
</dbReference>
<dbReference type="GO" id="GO:0005739">
    <property type="term" value="C:mitochondrion"/>
    <property type="evidence" value="ECO:0000318"/>
    <property type="project" value="GO_Central"/>
</dbReference>
<dbReference type="GO" id="GO:0008495">
    <property type="term" value="F:protoheme IX farnesyltransferase activity"/>
    <property type="evidence" value="ECO:0000318"/>
    <property type="project" value="GO_Central"/>
</dbReference>
<dbReference type="GO" id="GO:0006784">
    <property type="term" value="P:heme A biosynthetic process"/>
    <property type="evidence" value="ECO:0000318"/>
    <property type="project" value="GO_Central"/>
</dbReference>
<dbReference type="CDD" id="cd13957">
    <property type="entry name" value="PT_UbiA_Cox10"/>
    <property type="match status" value="1"/>
</dbReference>
<dbReference type="FunFam" id="1.10.357.140:FF:000004">
    <property type="entry name" value="Protoheme IX farnesyltransferase, mitochondrial"/>
    <property type="match status" value="1"/>
</dbReference>
<dbReference type="Gene3D" id="1.10.357.140">
    <property type="entry name" value="UbiA prenyltransferase"/>
    <property type="match status" value="1"/>
</dbReference>
<dbReference type="HAMAP" id="MF_00154">
    <property type="entry name" value="CyoE_CtaB"/>
    <property type="match status" value="1"/>
</dbReference>
<dbReference type="InterPro" id="IPR006369">
    <property type="entry name" value="Protohaem_IX_farnesylTrfase"/>
</dbReference>
<dbReference type="InterPro" id="IPR016315">
    <property type="entry name" value="Protohaem_IX_farnesylTrfase_mt"/>
</dbReference>
<dbReference type="InterPro" id="IPR000537">
    <property type="entry name" value="UbiA_prenyltransferase"/>
</dbReference>
<dbReference type="InterPro" id="IPR030470">
    <property type="entry name" value="UbiA_prenylTrfase_CS"/>
</dbReference>
<dbReference type="InterPro" id="IPR044878">
    <property type="entry name" value="UbiA_sf"/>
</dbReference>
<dbReference type="NCBIfam" id="TIGR01473">
    <property type="entry name" value="cyoE_ctaB"/>
    <property type="match status" value="1"/>
</dbReference>
<dbReference type="PANTHER" id="PTHR43448">
    <property type="entry name" value="PROTOHEME IX FARNESYLTRANSFERASE, MITOCHONDRIAL"/>
    <property type="match status" value="1"/>
</dbReference>
<dbReference type="PANTHER" id="PTHR43448:SF2">
    <property type="entry name" value="PROTOHEME IX FARNESYLTRANSFERASE, MITOCHONDRIAL"/>
    <property type="match status" value="1"/>
</dbReference>
<dbReference type="Pfam" id="PF01040">
    <property type="entry name" value="UbiA"/>
    <property type="match status" value="1"/>
</dbReference>
<dbReference type="PIRSF" id="PIRSF001773">
    <property type="entry name" value="COX10"/>
    <property type="match status" value="1"/>
</dbReference>
<dbReference type="PROSITE" id="PS00943">
    <property type="entry name" value="UBIA"/>
    <property type="match status" value="1"/>
</dbReference>
<protein>
    <recommendedName>
        <fullName>Protoheme IX farnesyltransferase, mitochondrial</fullName>
        <ecNumber evidence="2">2.5.1.141</ecNumber>
    </recommendedName>
    <alternativeName>
        <fullName>Heme O synthase</fullName>
    </alternativeName>
</protein>
<keyword id="KW-0350">Heme biosynthesis</keyword>
<keyword id="KW-0472">Membrane</keyword>
<keyword id="KW-0496">Mitochondrion</keyword>
<keyword id="KW-1185">Reference proteome</keyword>
<keyword id="KW-0808">Transferase</keyword>
<keyword id="KW-0809">Transit peptide</keyword>
<keyword id="KW-0812">Transmembrane</keyword>
<keyword id="KW-1133">Transmembrane helix</keyword>
<comment type="function">
    <text evidence="1">Converts protoheme IX and farnesyl diphosphate to heme O.</text>
</comment>
<comment type="catalytic activity">
    <reaction evidence="2">
        <text>heme b + (2E,6E)-farnesyl diphosphate + H2O = Fe(II)-heme o + diphosphate</text>
        <dbReference type="Rhea" id="RHEA:28070"/>
        <dbReference type="ChEBI" id="CHEBI:15377"/>
        <dbReference type="ChEBI" id="CHEBI:33019"/>
        <dbReference type="ChEBI" id="CHEBI:60344"/>
        <dbReference type="ChEBI" id="CHEBI:60530"/>
        <dbReference type="ChEBI" id="CHEBI:175763"/>
        <dbReference type="EC" id="2.5.1.141"/>
    </reaction>
</comment>
<comment type="subcellular location">
    <subcellularLocation>
        <location evidence="1">Mitochondrion membrane</location>
        <topology evidence="1">Multi-pass membrane protein</topology>
    </subcellularLocation>
</comment>
<comment type="similarity">
    <text evidence="4">Belongs to the UbiA prenyltransferase family.</text>
</comment>
<proteinExistence type="inferred from homology"/>
<organism>
    <name type="scientific">Yarrowia lipolytica (strain CLIB 122 / E 150)</name>
    <name type="common">Yeast</name>
    <name type="synonym">Candida lipolytica</name>
    <dbReference type="NCBI Taxonomy" id="284591"/>
    <lineage>
        <taxon>Eukaryota</taxon>
        <taxon>Fungi</taxon>
        <taxon>Dikarya</taxon>
        <taxon>Ascomycota</taxon>
        <taxon>Saccharomycotina</taxon>
        <taxon>Dipodascomycetes</taxon>
        <taxon>Dipodascales</taxon>
        <taxon>Dipodascales incertae sedis</taxon>
        <taxon>Yarrowia</taxon>
    </lineage>
</organism>
<feature type="transit peptide" description="Mitochondrion" evidence="3">
    <location>
        <begin position="1"/>
        <end position="60"/>
    </location>
</feature>
<feature type="chain" id="PRO_0000045421" description="Protoheme IX farnesyltransferase, mitochondrial">
    <location>
        <begin position="61"/>
        <end position="471"/>
    </location>
</feature>
<feature type="transmembrane region" description="Helical" evidence="3">
    <location>
        <begin position="188"/>
        <end position="208"/>
    </location>
</feature>
<feature type="transmembrane region" description="Helical" evidence="3">
    <location>
        <begin position="247"/>
        <end position="267"/>
    </location>
</feature>
<feature type="transmembrane region" description="Helical" evidence="3">
    <location>
        <begin position="287"/>
        <end position="307"/>
    </location>
</feature>
<feature type="transmembrane region" description="Helical" evidence="3">
    <location>
        <begin position="312"/>
        <end position="332"/>
    </location>
</feature>
<feature type="transmembrane region" description="Helical" evidence="3">
    <location>
        <begin position="368"/>
        <end position="388"/>
    </location>
</feature>
<feature type="transmembrane region" description="Helical" evidence="3">
    <location>
        <begin position="430"/>
        <end position="450"/>
    </location>
</feature>